<reference key="1">
    <citation type="submission" date="2005-07" db="EMBL/GenBank/DDBJ databases">
        <title>Ribosomal proteins of Coleoptera.</title>
        <authorList>
            <person name="Longhorn S.J."/>
            <person name="Vogler A.P."/>
        </authorList>
    </citation>
    <scope>NUCLEOTIDE SEQUENCE [MRNA]</scope>
</reference>
<dbReference type="EMBL" id="AM049047">
    <property type="protein sequence ID" value="CAJ17286.1"/>
    <property type="molecule type" value="mRNA"/>
</dbReference>
<dbReference type="SMR" id="Q4GXH6"/>
<dbReference type="GO" id="GO:0022625">
    <property type="term" value="C:cytosolic large ribosomal subunit"/>
    <property type="evidence" value="ECO:0007669"/>
    <property type="project" value="TreeGrafter"/>
</dbReference>
<dbReference type="GO" id="GO:0003735">
    <property type="term" value="F:structural constituent of ribosome"/>
    <property type="evidence" value="ECO:0007669"/>
    <property type="project" value="InterPro"/>
</dbReference>
<dbReference type="GO" id="GO:0002181">
    <property type="term" value="P:cytoplasmic translation"/>
    <property type="evidence" value="ECO:0007669"/>
    <property type="project" value="TreeGrafter"/>
</dbReference>
<dbReference type="CDD" id="cd00336">
    <property type="entry name" value="Ribosomal_L22"/>
    <property type="match status" value="1"/>
</dbReference>
<dbReference type="FunFam" id="3.90.470.10:FF:000003">
    <property type="entry name" value="60S ribosomal protein L17"/>
    <property type="match status" value="1"/>
</dbReference>
<dbReference type="Gene3D" id="3.90.470.10">
    <property type="entry name" value="Ribosomal protein L22/L17"/>
    <property type="match status" value="1"/>
</dbReference>
<dbReference type="InterPro" id="IPR001063">
    <property type="entry name" value="Ribosomal_uL22"/>
</dbReference>
<dbReference type="InterPro" id="IPR018260">
    <property type="entry name" value="Ribosomal_uL22_CS"/>
</dbReference>
<dbReference type="InterPro" id="IPR005721">
    <property type="entry name" value="Ribosomal_uL22_euk/arc"/>
</dbReference>
<dbReference type="InterPro" id="IPR036394">
    <property type="entry name" value="Ribosomal_uL22_sf"/>
</dbReference>
<dbReference type="NCBIfam" id="TIGR01038">
    <property type="entry name" value="uL22_arch_euk"/>
    <property type="match status" value="1"/>
</dbReference>
<dbReference type="PANTHER" id="PTHR11593">
    <property type="entry name" value="60S RIBOSOMAL PROTEIN L17"/>
    <property type="match status" value="1"/>
</dbReference>
<dbReference type="PANTHER" id="PTHR11593:SF10">
    <property type="entry name" value="60S RIBOSOMAL PROTEIN L17"/>
    <property type="match status" value="1"/>
</dbReference>
<dbReference type="Pfam" id="PF00237">
    <property type="entry name" value="Ribosomal_L22"/>
    <property type="match status" value="1"/>
</dbReference>
<dbReference type="SUPFAM" id="SSF54843">
    <property type="entry name" value="Ribosomal protein L22"/>
    <property type="match status" value="1"/>
</dbReference>
<dbReference type="PROSITE" id="PS00464">
    <property type="entry name" value="RIBOSOMAL_L22"/>
    <property type="match status" value="1"/>
</dbReference>
<comment type="similarity">
    <text evidence="2">Belongs to the universal ribosomal protein uL22 family.</text>
</comment>
<name>RL17_BIPLU</name>
<feature type="chain" id="PRO_0000323408" description="Large ribosomal subunit protein uL22">
    <location>
        <begin position="1"/>
        <end position="181"/>
    </location>
</feature>
<feature type="region of interest" description="Disordered" evidence="1">
    <location>
        <begin position="157"/>
        <end position="181"/>
    </location>
</feature>
<proteinExistence type="evidence at transcript level"/>
<accession>Q4GXH6</accession>
<gene>
    <name type="primary">RpL17</name>
</gene>
<protein>
    <recommendedName>
        <fullName evidence="2">Large ribosomal subunit protein uL22</fullName>
    </recommendedName>
    <alternativeName>
        <fullName>60S ribosomal protein L17</fullName>
    </alternativeName>
</protein>
<keyword id="KW-0687">Ribonucleoprotein</keyword>
<keyword id="KW-0689">Ribosomal protein</keyword>
<evidence type="ECO:0000256" key="1">
    <source>
        <dbReference type="SAM" id="MobiDB-lite"/>
    </source>
</evidence>
<evidence type="ECO:0000305" key="2"/>
<organism>
    <name type="scientific">Biphyllus lunatus</name>
    <name type="common">Beetle</name>
    <dbReference type="NCBI Taxonomy" id="197003"/>
    <lineage>
        <taxon>Eukaryota</taxon>
        <taxon>Metazoa</taxon>
        <taxon>Ecdysozoa</taxon>
        <taxon>Arthropoda</taxon>
        <taxon>Hexapoda</taxon>
        <taxon>Insecta</taxon>
        <taxon>Pterygota</taxon>
        <taxon>Neoptera</taxon>
        <taxon>Endopterygota</taxon>
        <taxon>Coleoptera</taxon>
        <taxon>Polyphaga</taxon>
        <taxon>Cucujiformia</taxon>
        <taxon>Biphyllidae</taxon>
        <taxon>Biphyllus</taxon>
    </lineage>
</organism>
<sequence length="181" mass="20242">MGRYAREPDNAGKSCKARGSNLRVHFKNTCETANAIRKMPLKRAVAYLKNVTAQKECVPFRRFNGGVGRCAQAKQFGTTQGRWPKKSAEFLLQLLRNAESNADYSGLDVDRLVVQHIQVNRAACLRRRTYRAHGRINPYMSSPCHIELWLTEAESVPEAAKKPGKKTSAVEKSKKATAATH</sequence>